<proteinExistence type="inferred from homology"/>
<name>DNAK_RUEST</name>
<accession>Q1GKS3</accession>
<evidence type="ECO:0000255" key="1">
    <source>
        <dbReference type="HAMAP-Rule" id="MF_00332"/>
    </source>
</evidence>
<evidence type="ECO:0000256" key="2">
    <source>
        <dbReference type="SAM" id="MobiDB-lite"/>
    </source>
</evidence>
<protein>
    <recommendedName>
        <fullName evidence="1">Chaperone protein DnaK</fullName>
    </recommendedName>
    <alternativeName>
        <fullName evidence="1">HSP70</fullName>
    </alternativeName>
    <alternativeName>
        <fullName evidence="1">Heat shock 70 kDa protein</fullName>
    </alternativeName>
    <alternativeName>
        <fullName evidence="1">Heat shock protein 70</fullName>
    </alternativeName>
</protein>
<keyword id="KW-0067">ATP-binding</keyword>
<keyword id="KW-0143">Chaperone</keyword>
<keyword id="KW-0547">Nucleotide-binding</keyword>
<keyword id="KW-0597">Phosphoprotein</keyword>
<keyword id="KW-1185">Reference proteome</keyword>
<keyword id="KW-0346">Stress response</keyword>
<gene>
    <name evidence="1" type="primary">dnaK</name>
    <name type="ordered locus">TM1040_0010</name>
</gene>
<reference key="1">
    <citation type="submission" date="2006-05" db="EMBL/GenBank/DDBJ databases">
        <title>Complete sequence of chromosome of Silicibacter sp. TM1040.</title>
        <authorList>
            <consortium name="US DOE Joint Genome Institute"/>
            <person name="Copeland A."/>
            <person name="Lucas S."/>
            <person name="Lapidus A."/>
            <person name="Barry K."/>
            <person name="Detter J.C."/>
            <person name="Glavina del Rio T."/>
            <person name="Hammon N."/>
            <person name="Israni S."/>
            <person name="Dalin E."/>
            <person name="Tice H."/>
            <person name="Pitluck S."/>
            <person name="Brettin T."/>
            <person name="Bruce D."/>
            <person name="Han C."/>
            <person name="Tapia R."/>
            <person name="Goodwin L."/>
            <person name="Thompson L.S."/>
            <person name="Gilna P."/>
            <person name="Schmutz J."/>
            <person name="Larimer F."/>
            <person name="Land M."/>
            <person name="Hauser L."/>
            <person name="Kyrpides N."/>
            <person name="Kim E."/>
            <person name="Belas R."/>
            <person name="Moran M.A."/>
            <person name="Buchan A."/>
            <person name="Gonzalez J.M."/>
            <person name="Schell M.A."/>
            <person name="Sun F."/>
            <person name="Richardson P."/>
        </authorList>
    </citation>
    <scope>NUCLEOTIDE SEQUENCE [LARGE SCALE GENOMIC DNA]</scope>
    <source>
        <strain>TM1040</strain>
    </source>
</reference>
<comment type="function">
    <text evidence="1">Acts as a chaperone.</text>
</comment>
<comment type="induction">
    <text evidence="1">By stress conditions e.g. heat shock.</text>
</comment>
<comment type="similarity">
    <text evidence="1">Belongs to the heat shock protein 70 family.</text>
</comment>
<dbReference type="EMBL" id="CP000377">
    <property type="protein sequence ID" value="ABF62743.1"/>
    <property type="molecule type" value="Genomic_DNA"/>
</dbReference>
<dbReference type="RefSeq" id="WP_011537381.1">
    <property type="nucleotide sequence ID" value="NC_008044.1"/>
</dbReference>
<dbReference type="SMR" id="Q1GKS3"/>
<dbReference type="STRING" id="292414.TM1040_0010"/>
<dbReference type="KEGG" id="sit:TM1040_0010"/>
<dbReference type="eggNOG" id="COG0443">
    <property type="taxonomic scope" value="Bacteria"/>
</dbReference>
<dbReference type="HOGENOM" id="CLU_005965_2_1_5"/>
<dbReference type="OrthoDB" id="9766019at2"/>
<dbReference type="Proteomes" id="UP000000636">
    <property type="component" value="Chromosome"/>
</dbReference>
<dbReference type="GO" id="GO:0005524">
    <property type="term" value="F:ATP binding"/>
    <property type="evidence" value="ECO:0007669"/>
    <property type="project" value="UniProtKB-UniRule"/>
</dbReference>
<dbReference type="GO" id="GO:0140662">
    <property type="term" value="F:ATP-dependent protein folding chaperone"/>
    <property type="evidence" value="ECO:0007669"/>
    <property type="project" value="InterPro"/>
</dbReference>
<dbReference type="GO" id="GO:0051082">
    <property type="term" value="F:unfolded protein binding"/>
    <property type="evidence" value="ECO:0007669"/>
    <property type="project" value="InterPro"/>
</dbReference>
<dbReference type="FunFam" id="2.60.34.10:FF:000014">
    <property type="entry name" value="Chaperone protein DnaK HSP70"/>
    <property type="match status" value="1"/>
</dbReference>
<dbReference type="FunFam" id="1.20.1270.10:FF:000001">
    <property type="entry name" value="Molecular chaperone DnaK"/>
    <property type="match status" value="1"/>
</dbReference>
<dbReference type="FunFam" id="3.30.420.40:FF:000004">
    <property type="entry name" value="Molecular chaperone DnaK"/>
    <property type="match status" value="1"/>
</dbReference>
<dbReference type="FunFam" id="3.90.640.10:FF:000003">
    <property type="entry name" value="Molecular chaperone DnaK"/>
    <property type="match status" value="1"/>
</dbReference>
<dbReference type="Gene3D" id="1.20.1270.10">
    <property type="match status" value="1"/>
</dbReference>
<dbReference type="Gene3D" id="3.30.420.40">
    <property type="match status" value="2"/>
</dbReference>
<dbReference type="Gene3D" id="3.90.640.10">
    <property type="entry name" value="Actin, Chain A, domain 4"/>
    <property type="match status" value="1"/>
</dbReference>
<dbReference type="Gene3D" id="2.60.34.10">
    <property type="entry name" value="Substrate Binding Domain Of DNAk, Chain A, domain 1"/>
    <property type="match status" value="1"/>
</dbReference>
<dbReference type="HAMAP" id="MF_00332">
    <property type="entry name" value="DnaK"/>
    <property type="match status" value="1"/>
</dbReference>
<dbReference type="InterPro" id="IPR043129">
    <property type="entry name" value="ATPase_NBD"/>
</dbReference>
<dbReference type="InterPro" id="IPR012725">
    <property type="entry name" value="Chaperone_DnaK"/>
</dbReference>
<dbReference type="InterPro" id="IPR018181">
    <property type="entry name" value="Heat_shock_70_CS"/>
</dbReference>
<dbReference type="InterPro" id="IPR029048">
    <property type="entry name" value="HSP70_C_sf"/>
</dbReference>
<dbReference type="InterPro" id="IPR029047">
    <property type="entry name" value="HSP70_peptide-bd_sf"/>
</dbReference>
<dbReference type="InterPro" id="IPR013126">
    <property type="entry name" value="Hsp_70_fam"/>
</dbReference>
<dbReference type="NCBIfam" id="NF001413">
    <property type="entry name" value="PRK00290.1"/>
    <property type="match status" value="1"/>
</dbReference>
<dbReference type="NCBIfam" id="NF003520">
    <property type="entry name" value="PRK05183.1"/>
    <property type="match status" value="1"/>
</dbReference>
<dbReference type="NCBIfam" id="TIGR02350">
    <property type="entry name" value="prok_dnaK"/>
    <property type="match status" value="1"/>
</dbReference>
<dbReference type="PANTHER" id="PTHR19375">
    <property type="entry name" value="HEAT SHOCK PROTEIN 70KDA"/>
    <property type="match status" value="1"/>
</dbReference>
<dbReference type="Pfam" id="PF00012">
    <property type="entry name" value="HSP70"/>
    <property type="match status" value="1"/>
</dbReference>
<dbReference type="PRINTS" id="PR00301">
    <property type="entry name" value="HEATSHOCK70"/>
</dbReference>
<dbReference type="SUPFAM" id="SSF53067">
    <property type="entry name" value="Actin-like ATPase domain"/>
    <property type="match status" value="2"/>
</dbReference>
<dbReference type="SUPFAM" id="SSF100934">
    <property type="entry name" value="Heat shock protein 70kD (HSP70), C-terminal subdomain"/>
    <property type="match status" value="1"/>
</dbReference>
<dbReference type="SUPFAM" id="SSF100920">
    <property type="entry name" value="Heat shock protein 70kD (HSP70), peptide-binding domain"/>
    <property type="match status" value="1"/>
</dbReference>
<dbReference type="PROSITE" id="PS00297">
    <property type="entry name" value="HSP70_1"/>
    <property type="match status" value="1"/>
</dbReference>
<dbReference type="PROSITE" id="PS00329">
    <property type="entry name" value="HSP70_2"/>
    <property type="match status" value="1"/>
</dbReference>
<dbReference type="PROSITE" id="PS01036">
    <property type="entry name" value="HSP70_3"/>
    <property type="match status" value="1"/>
</dbReference>
<feature type="chain" id="PRO_1000059670" description="Chaperone protein DnaK">
    <location>
        <begin position="1"/>
        <end position="642"/>
    </location>
</feature>
<feature type="region of interest" description="Disordered" evidence="2">
    <location>
        <begin position="603"/>
        <end position="642"/>
    </location>
</feature>
<feature type="compositionally biased region" description="Acidic residues" evidence="2">
    <location>
        <begin position="608"/>
        <end position="642"/>
    </location>
</feature>
<feature type="modified residue" description="Phosphothreonine; by autocatalysis" evidence="1">
    <location>
        <position position="197"/>
    </location>
</feature>
<organism>
    <name type="scientific">Ruegeria sp. (strain TM1040)</name>
    <name type="common">Silicibacter sp.</name>
    <dbReference type="NCBI Taxonomy" id="292414"/>
    <lineage>
        <taxon>Bacteria</taxon>
        <taxon>Pseudomonadati</taxon>
        <taxon>Pseudomonadota</taxon>
        <taxon>Alphaproteobacteria</taxon>
        <taxon>Rhodobacterales</taxon>
        <taxon>Roseobacteraceae</taxon>
        <taxon>Ruegeria</taxon>
    </lineage>
</organism>
<sequence>MSKVIGIDLGTTNSCVAIMDGSQPRVIENAEGARTTPSIVAFTDEERLVGQPAKRQAVTNPDNTIFGVKRLIGRRFDDSDLAKDKKNLPFAVINGGNGDAWVEAKSEKYSPSQISAFILGKMKETAESYLGEEVTQAVITVPAYFNDAQRQATKDAGKIAGLEVLRIINEPTAAALAYGLDKAETQTIAVYDLGGGTFDVTILEIDDGLFEVKSTNGDTFLGGEDFDMRIVNYLADEFKKEHGVDLTKDKMALQRLKEAAEKAKIELSSSSQTEINQPFISMDPSSGQPLHLVIKLTRAKLESLVGDLIKNSMKPCAAALKDAGLSASDIDEVVLVGGMTRMPKVIEEVTKFFGKEPHKGVNPDEVVAMGAAIQAGVLQGDVKDVVLLDVTPLSLGIETLGGVFTRLIDRNTTIPTKKSQVFSTAEDNQNAVTIRVFQGEREMAADNKMLGQFNLEDIPPAPRGMPQIEVTFDIDANGIVSVSAKDKGTGKEQKITIQASGGLSDEDIEKMVKDAEDNAEADKERRELIEARNQAESLIHSTEKSIEDHGDKVDPSTIEAIELAIAALKDDLEGDKANAEKIKSGIQNVTEAAMRLGEAIYKAQAEEGGADEPSAADEDASAGPGDDDIVDAEFEDLDDNKR</sequence>